<keyword id="KW-1015">Disulfide bond</keyword>
<keyword id="KW-0325">Glycoprotein</keyword>
<keyword id="KW-0378">Hydrolase</keyword>
<keyword id="KW-0645">Protease</keyword>
<keyword id="KW-0732">Signal</keyword>
<keyword id="KW-0788">Thiol protease</keyword>
<keyword id="KW-0865">Zymogen</keyword>
<organismHost>
    <name type="scientific">Bombyx mori</name>
    <name type="common">Silk moth</name>
    <dbReference type="NCBI Taxonomy" id="7091"/>
</organismHost>
<name>CATV_NPVBM</name>
<dbReference type="EC" id="3.4.22.50"/>
<dbReference type="EMBL" id="U12688">
    <property type="protein sequence ID" value="AAB49542.1"/>
    <property type="molecule type" value="Genomic_DNA"/>
</dbReference>
<dbReference type="EMBL" id="L33180">
    <property type="protein sequence ID" value="AAC63793.1"/>
    <property type="molecule type" value="Genomic_DNA"/>
</dbReference>
<dbReference type="EMBL" id="AY182246">
    <property type="protein sequence ID" value="AAO23117.1"/>
    <property type="molecule type" value="Genomic_DNA"/>
</dbReference>
<dbReference type="PIR" id="JC5691">
    <property type="entry name" value="JC5691"/>
</dbReference>
<dbReference type="RefSeq" id="NP_047524.1">
    <property type="nucleotide sequence ID" value="NC_001962.1"/>
</dbReference>
<dbReference type="SMR" id="P41721"/>
<dbReference type="MEROPS" id="C01.083"/>
<dbReference type="GlyCosmos" id="P41721">
    <property type="glycosylation" value="1 site, No reported glycans"/>
</dbReference>
<dbReference type="KEGG" id="vg:1724490"/>
<dbReference type="OrthoDB" id="4752at10239"/>
<dbReference type="BRENDA" id="3.4.22.50">
    <property type="organism ID" value="891"/>
</dbReference>
<dbReference type="Proteomes" id="UP000204315">
    <property type="component" value="Genome"/>
</dbReference>
<dbReference type="GO" id="GO:0008234">
    <property type="term" value="F:cysteine-type peptidase activity"/>
    <property type="evidence" value="ECO:0007669"/>
    <property type="project" value="UniProtKB-KW"/>
</dbReference>
<dbReference type="GO" id="GO:0006508">
    <property type="term" value="P:proteolysis"/>
    <property type="evidence" value="ECO:0007669"/>
    <property type="project" value="UniProtKB-KW"/>
</dbReference>
<dbReference type="CDD" id="cd02248">
    <property type="entry name" value="Peptidase_C1A"/>
    <property type="match status" value="1"/>
</dbReference>
<dbReference type="Gene3D" id="3.90.70.10">
    <property type="entry name" value="Cysteine proteinases"/>
    <property type="match status" value="1"/>
</dbReference>
<dbReference type="InterPro" id="IPR038765">
    <property type="entry name" value="Papain-like_cys_pep_sf"/>
</dbReference>
<dbReference type="InterPro" id="IPR025661">
    <property type="entry name" value="Pept_asp_AS"/>
</dbReference>
<dbReference type="InterPro" id="IPR000169">
    <property type="entry name" value="Pept_cys_AS"/>
</dbReference>
<dbReference type="InterPro" id="IPR025660">
    <property type="entry name" value="Pept_his_AS"/>
</dbReference>
<dbReference type="InterPro" id="IPR013128">
    <property type="entry name" value="Peptidase_C1A"/>
</dbReference>
<dbReference type="InterPro" id="IPR000668">
    <property type="entry name" value="Peptidase_C1A_C"/>
</dbReference>
<dbReference type="InterPro" id="IPR039417">
    <property type="entry name" value="Peptidase_C1A_papain-like"/>
</dbReference>
<dbReference type="InterPro" id="IPR013201">
    <property type="entry name" value="Prot_inhib_I29"/>
</dbReference>
<dbReference type="PANTHER" id="PTHR12411">
    <property type="entry name" value="CYSTEINE PROTEASE FAMILY C1-RELATED"/>
    <property type="match status" value="1"/>
</dbReference>
<dbReference type="Pfam" id="PF08246">
    <property type="entry name" value="Inhibitor_I29"/>
    <property type="match status" value="1"/>
</dbReference>
<dbReference type="Pfam" id="PF00112">
    <property type="entry name" value="Peptidase_C1"/>
    <property type="match status" value="1"/>
</dbReference>
<dbReference type="PRINTS" id="PR00705">
    <property type="entry name" value="PAPAIN"/>
</dbReference>
<dbReference type="SMART" id="SM00848">
    <property type="entry name" value="Inhibitor_I29"/>
    <property type="match status" value="1"/>
</dbReference>
<dbReference type="SMART" id="SM00645">
    <property type="entry name" value="Pept_C1"/>
    <property type="match status" value="1"/>
</dbReference>
<dbReference type="SUPFAM" id="SSF54001">
    <property type="entry name" value="Cysteine proteinases"/>
    <property type="match status" value="1"/>
</dbReference>
<dbReference type="PROSITE" id="PS00640">
    <property type="entry name" value="THIOL_PROTEASE_ASN"/>
    <property type="match status" value="1"/>
</dbReference>
<dbReference type="PROSITE" id="PS00139">
    <property type="entry name" value="THIOL_PROTEASE_CYS"/>
    <property type="match status" value="1"/>
</dbReference>
<dbReference type="PROSITE" id="PS00639">
    <property type="entry name" value="THIOL_PROTEASE_HIS"/>
    <property type="match status" value="1"/>
</dbReference>
<protein>
    <recommendedName>
        <fullName>Viral cathepsin</fullName>
        <shortName>V-cath</shortName>
        <ecNumber>3.4.22.50</ecNumber>
    </recommendedName>
    <alternativeName>
        <fullName>Cysteine proteinase</fullName>
        <shortName>CP</shortName>
    </alternativeName>
</protein>
<gene>
    <name type="primary">VCATH</name>
</gene>
<proteinExistence type="evidence at protein level"/>
<evidence type="ECO:0000250" key="1"/>
<evidence type="ECO:0000255" key="2"/>
<evidence type="ECO:0000255" key="3">
    <source>
        <dbReference type="PROSITE-ProRule" id="PRU10088"/>
    </source>
</evidence>
<evidence type="ECO:0000255" key="4">
    <source>
        <dbReference type="PROSITE-ProRule" id="PRU10089"/>
    </source>
</evidence>
<evidence type="ECO:0000255" key="5">
    <source>
        <dbReference type="PROSITE-ProRule" id="PRU10090"/>
    </source>
</evidence>
<evidence type="ECO:0000305" key="6"/>
<reference key="1">
    <citation type="journal article" date="1994" name="J. Virol.">
        <title>A cysteine protease encoded by the baculovirus Bombyx mori nuclear polyhedrosis virus.</title>
        <authorList>
            <person name="Ohkawa T."/>
            <person name="Majima K."/>
            <person name="Maeda S."/>
        </authorList>
    </citation>
    <scope>NUCLEOTIDE SEQUENCE [GENOMIC DNA]</scope>
    <source>
        <strain>T3</strain>
    </source>
</reference>
<reference key="2">
    <citation type="journal article" date="1999" name="J. Gen. Virol.">
        <title>Sequence analysis of the genome of Bombyx mori nucleopolyhedrovirus.</title>
        <authorList>
            <person name="Gomi S."/>
            <person name="Majima K."/>
            <person name="Maeda S."/>
        </authorList>
    </citation>
    <scope>NUCLEOTIDE SEQUENCE [LARGE SCALE GENOMIC DNA]</scope>
    <source>
        <strain>T3</strain>
    </source>
</reference>
<reference key="3">
    <citation type="journal article" date="2002" name="Can Ye Ke Xue">
        <title>Sequence analysis and expression of cysteine proteinase gene from Bombyx mori baculovirus.</title>
        <authorList>
            <person name="Lin X."/>
            <person name="Zhang Z."/>
            <person name="Li W."/>
            <person name="He J."/>
            <person name="Shang J."/>
        </authorList>
    </citation>
    <scope>NUCLEOTIDE SEQUENCE [GENOMIC DNA]</scope>
    <source>
        <strain>ZJ-8</strain>
    </source>
</reference>
<reference key="4">
    <citation type="journal article" date="1997" name="Biosci. Biotechnol. Biochem.">
        <title>Purification and characterization of cysteine proteinase from a baculovirus gene.</title>
        <authorList>
            <person name="Takahashi S."/>
            <person name="Ushiyama S."/>
            <person name="Suzuki T."/>
            <person name="Ogawa K."/>
            <person name="Oda K."/>
        </authorList>
    </citation>
    <scope>CHARACTERIZATION</scope>
</reference>
<accession>P41721</accession>
<accession>Q80QU5</accession>
<organism>
    <name type="scientific">Bombyx mori nuclear polyhedrosis virus</name>
    <name type="common">BmNPV</name>
    <dbReference type="NCBI Taxonomy" id="271108"/>
    <lineage>
        <taxon>Viruses</taxon>
        <taxon>Viruses incertae sedis</taxon>
        <taxon>Naldaviricetes</taxon>
        <taxon>Lefavirales</taxon>
        <taxon>Baculoviridae</taxon>
        <taxon>Alphabaculovirus</taxon>
        <taxon>Alphabaculovirus bomori</taxon>
    </lineage>
</organism>
<sequence length="323" mass="36922">MNKILFYLFVYAVVKSAAYDPLKAPNYFEEFVHRFNKNYSSEVEKLRRFKIFQHNLNEIINKNQNDSAKYEINKFSDLSKDETIAKYTGLSLPTQTQNFCKVILLDQPPGKGPLEFDWRRLNKVTSVKNQGMCGACWAFATLGSLESQFAIKHNELINLSEQQMIDCDFVDAGCNGGLLHTAFEAIIKMGGVQLESDYPYEADNNNCRMNSNKFLVQVKDCYRYIIVYEEKLKDLLPLVGPIPMAIDAADIVNYKQGIIKYCFDSGLNHAVLLVGYGVENNIPYWTFKNTWGTDWGEDGFFRVQQNINACGMRNELASTAVIY</sequence>
<comment type="function">
    <text>Cysteine protease that plays an essential role in host liquefaction to facilitate horizontal transmission of the virus. May participate in the degradation of foreign protein expressed by the baculovirus system.</text>
</comment>
<comment type="catalytic activity">
    <reaction>
        <text>Endopeptidase of broad specificity, hydrolyzing substrates of both cathepsin L and cathepsin B.</text>
        <dbReference type="EC" id="3.4.22.50"/>
    </reaction>
</comment>
<comment type="PTM">
    <text evidence="1">Synthesized as an inactive proenzyme and activated by proteolytic removal of the inhibitory propeptide.</text>
</comment>
<comment type="miscellaneous">
    <text>Optimal pH is 4.0, also active at neutral pHs.</text>
</comment>
<comment type="similarity">
    <text evidence="3 4 5">Belongs to the peptidase C1 family.</text>
</comment>
<feature type="signal peptide" evidence="2">
    <location>
        <begin position="1"/>
        <end position="16"/>
    </location>
</feature>
<feature type="propeptide" id="PRO_0000322204" description="Activation peptide" evidence="2">
    <location>
        <begin position="17"/>
        <end position="112"/>
    </location>
</feature>
<feature type="chain" id="PRO_0000050575" description="Viral cathepsin">
    <location>
        <begin position="113"/>
        <end position="323"/>
    </location>
</feature>
<feature type="active site" evidence="1">
    <location>
        <position position="136"/>
    </location>
</feature>
<feature type="active site" evidence="1">
    <location>
        <position position="269"/>
    </location>
</feature>
<feature type="active site" evidence="1">
    <location>
        <position position="289"/>
    </location>
</feature>
<feature type="glycosylation site" description="N-linked (GlcNAc...) asparagine; by host" evidence="2">
    <location>
        <position position="158"/>
    </location>
</feature>
<feature type="disulfide bond" evidence="1">
    <location>
        <begin position="133"/>
        <end position="174"/>
    </location>
</feature>
<feature type="disulfide bond" evidence="1">
    <location>
        <begin position="167"/>
        <end position="207"/>
    </location>
</feature>
<feature type="disulfide bond" evidence="1">
    <location>
        <begin position="262"/>
        <end position="310"/>
    </location>
</feature>
<feature type="sequence conflict" description="In Ref. 3; AAO23117." evidence="6" ref="3">
    <original>D</original>
    <variation>G</variation>
    <location>
        <position position="166"/>
    </location>
</feature>
<feature type="sequence conflict" description="In Ref. 3; AAO23117." evidence="6" ref="3">
    <original>P</original>
    <variation>R</variation>
    <location>
        <position position="237"/>
    </location>
</feature>